<proteinExistence type="evidence at protein level"/>
<name>CIN_NICSU</name>
<comment type="function">
    <text evidence="4">Monoterpene synthase involved in the biosynthesis of monoterpene natural products of the 'cineole cassette', volatile compounds present in floral scent (PubMed:17611797). Catalyzes the conversion of (2E)-geranyl diphosphate (GPP) into 1,8-cineole and, as minor products, limonene, sabinene, (E)-beta-ocimene, beta-myrcene, alpha-pinene and alpha-terpineol (PubMed:17611797).</text>
</comment>
<comment type="catalytic activity">
    <reaction evidence="4">
        <text>(2E)-geranyl diphosphate + H2O = 1,8-cineole + diphosphate</text>
        <dbReference type="Rhea" id="RHEA:32543"/>
        <dbReference type="ChEBI" id="CHEBI:15377"/>
        <dbReference type="ChEBI" id="CHEBI:27961"/>
        <dbReference type="ChEBI" id="CHEBI:33019"/>
        <dbReference type="ChEBI" id="CHEBI:58057"/>
        <dbReference type="EC" id="4.2.3.108"/>
    </reaction>
    <physiologicalReaction direction="left-to-right" evidence="4">
        <dbReference type="Rhea" id="RHEA:32544"/>
    </physiologicalReaction>
</comment>
<comment type="catalytic activity">
    <reaction evidence="4">
        <text>(2E)-geranyl diphosphate = limonene + diphosphate</text>
        <dbReference type="Rhea" id="RHEA:68640"/>
        <dbReference type="ChEBI" id="CHEBI:15384"/>
        <dbReference type="ChEBI" id="CHEBI:33019"/>
        <dbReference type="ChEBI" id="CHEBI:58057"/>
    </reaction>
    <physiologicalReaction direction="left-to-right" evidence="4">
        <dbReference type="Rhea" id="RHEA:68641"/>
    </physiologicalReaction>
</comment>
<comment type="catalytic activity">
    <reaction evidence="4">
        <text>(2E)-geranyl diphosphate = sabinene + diphosphate</text>
        <dbReference type="Rhea" id="RHEA:68636"/>
        <dbReference type="ChEBI" id="CHEBI:33019"/>
        <dbReference type="ChEBI" id="CHEBI:50027"/>
        <dbReference type="ChEBI" id="CHEBI:58057"/>
    </reaction>
    <physiologicalReaction direction="left-to-right" evidence="4">
        <dbReference type="Rhea" id="RHEA:68637"/>
    </physiologicalReaction>
</comment>
<comment type="catalytic activity">
    <reaction evidence="4">
        <text>(2E)-geranyl diphosphate = (E)-beta-ocimene + diphosphate</text>
        <dbReference type="Rhea" id="RHEA:32691"/>
        <dbReference type="ChEBI" id="CHEBI:33019"/>
        <dbReference type="ChEBI" id="CHEBI:58057"/>
        <dbReference type="ChEBI" id="CHEBI:64280"/>
        <dbReference type="EC" id="4.2.3.106"/>
    </reaction>
    <physiologicalReaction direction="left-to-right" evidence="4">
        <dbReference type="Rhea" id="RHEA:32692"/>
    </physiologicalReaction>
</comment>
<comment type="catalytic activity">
    <reaction evidence="4">
        <text>(2E)-geranyl diphosphate = beta-myrcene + diphosphate</text>
        <dbReference type="Rhea" id="RHEA:16965"/>
        <dbReference type="ChEBI" id="CHEBI:17221"/>
        <dbReference type="ChEBI" id="CHEBI:33019"/>
        <dbReference type="ChEBI" id="CHEBI:58057"/>
        <dbReference type="EC" id="4.2.3.15"/>
    </reaction>
    <physiologicalReaction direction="left-to-right" evidence="4">
        <dbReference type="Rhea" id="RHEA:16966"/>
    </physiologicalReaction>
</comment>
<comment type="catalytic activity">
    <reaction evidence="4">
        <text>(2E)-geranyl diphosphate = alpha-pinene + diphosphate</text>
        <dbReference type="Rhea" id="RHEA:25662"/>
        <dbReference type="ChEBI" id="CHEBI:33019"/>
        <dbReference type="ChEBI" id="CHEBI:36740"/>
        <dbReference type="ChEBI" id="CHEBI:58057"/>
    </reaction>
    <physiologicalReaction direction="left-to-right" evidence="4">
        <dbReference type="Rhea" id="RHEA:25663"/>
    </physiologicalReaction>
</comment>
<comment type="catalytic activity">
    <reaction evidence="4">
        <text>(2E)-geranyl diphosphate + H2O = (S)-alpha-terpineol + diphosphate</text>
        <dbReference type="Rhea" id="RHEA:32551"/>
        <dbReference type="ChEBI" id="CHEBI:128"/>
        <dbReference type="ChEBI" id="CHEBI:15377"/>
        <dbReference type="ChEBI" id="CHEBI:33019"/>
        <dbReference type="ChEBI" id="CHEBI:58057"/>
        <dbReference type="EC" id="4.2.3.111"/>
    </reaction>
    <physiologicalReaction direction="left-to-right" evidence="4">
        <dbReference type="Rhea" id="RHEA:32552"/>
    </physiologicalReaction>
</comment>
<comment type="cofactor">
    <cofactor evidence="4">
        <name>Mg(2+)</name>
        <dbReference type="ChEBI" id="CHEBI:18420"/>
    </cofactor>
    <cofactor evidence="4">
        <name>Mn(2+)</name>
        <dbReference type="ChEBI" id="CHEBI:29035"/>
    </cofactor>
    <text evidence="4">Binds 3 Mg(2+) or Mn(2+) ions per subunit.</text>
</comment>
<comment type="biophysicochemical properties">
    <kinetics>
        <KM evidence="4">1.1 uM for (2E)-geranyl diphosphate</KM>
        <text evidence="4">kcat is 0.33 sec(-1) with (2E)-geranyl diphosphate as substrate.</text>
    </kinetics>
    <phDependence>
        <text evidence="4">Optimum pH is 8.</text>
    </phDependence>
    <temperatureDependence>
        <text evidence="4">Optimum temperature is 35 degrees Celsius.</text>
    </temperatureDependence>
</comment>
<comment type="pathway">
    <text evidence="4">Secondary metabolite biosynthesis; terpenoid biosynthesis.</text>
</comment>
<comment type="subunit">
    <text evidence="2">Monomer.</text>
</comment>
<comment type="subcellular location">
    <subcellularLocation>
        <location evidence="3">Plastid</location>
        <location evidence="3">Chloroplast</location>
    </subcellularLocation>
</comment>
<comment type="tissue specificity">
    <text evidence="4">Confined to buds and flowers.</text>
</comment>
<comment type="developmental stage">
    <text evidence="4">In flowers, restricted to stigma and style tissues as well as in petals, primarily in the adaxial and abaxial epidermis (PubMed:17611797). Barely detected in leaves, shoots, roots and sepals (PubMed:17611797).</text>
</comment>
<comment type="induction">
    <text evidence="4">In petals, transcripts, protein and enzyme activity levels follow a circadian oscillation, with an increase during afternoon to reach a maxima in darkness and exhibit lower levels in the morning, thus leading to a nocturnal emission of floral monoterpenes.</text>
</comment>
<comment type="domain">
    <text evidence="6">The Asp-Asp-Xaa-Xaa-Asp/Glu (DDXXD/E) motif is important for the catalytic activity, presumably through binding to Mg(2+).</text>
</comment>
<comment type="similarity">
    <text evidence="6">Belongs to the terpene synthase family. Tpsb subfamily.</text>
</comment>
<sequence>MNHHLIITPIFHLQIMLPVATLKRPPPPAATCSIYSFSRGTPSLVSKARLSTAAVGGMKNEPSPNHYSDISSSDLNLTRRSGNYGPTMWDFEYIQSIHNDYTEKKYMNRLNKLKEEMKKMIMAEGSQELEKLELIDNLQRLGVSYHFKHEIMQILSSIKQHSTPADSLYATALKFRLFREYGFHISQEIFGGLSETHTEDTKGMLYLYEASFLATEGESELEKARNWTEKHLREYLENKNDDQNVAELVHHALELPLHWRMLRIEARWFINFYKKKQDMIPLLLELAILDFNIVQAAHIEDLKYVARWWKETCLAENLPFARDRLVENFFWTIGVNFLPQYGYFRRIETKVNALVTTIDDVYDVFGTMDELQCFTHAFQRWNIDELDNLPDNMKMCYFALDNFINEVAGDAFEEHRVPILSYLRNAWTDLCKAYLREAKWYFSKYIPTMEEYMDNAWISISAPVILVHAYFLVANPVNKEVLHYLENYHDIIRWSALILRLANDLGTSSEELKRGDVPKSIQCYMNEKKVSEEEARQHIRLLISETWKKLNEAHNVAAHPFPKMFVKCAMNLARMAQCMYQHGDGHGHGDLNSETTNHIMALLFESIPPA</sequence>
<gene>
    <name evidence="5" type="primary">CIN</name>
</gene>
<keyword id="KW-0150">Chloroplast</keyword>
<keyword id="KW-0456">Lyase</keyword>
<keyword id="KW-0460">Magnesium</keyword>
<keyword id="KW-0479">Metal-binding</keyword>
<keyword id="KW-0934">Plastid</keyword>
<keyword id="KW-0809">Transit peptide</keyword>
<dbReference type="EC" id="4.2.3.108" evidence="4"/>
<dbReference type="EC" id="4.2.3.106" evidence="4"/>
<dbReference type="EC" id="4.2.3.-" evidence="4"/>
<dbReference type="EC" id="4.2.3.111" evidence="4"/>
<dbReference type="EC" id="4.2.3.15" evidence="4"/>
<dbReference type="EMBL" id="EF175166">
    <property type="protein sequence ID" value="ABP88782.1"/>
    <property type="molecule type" value="mRNA"/>
</dbReference>
<dbReference type="SMR" id="A5Y5L5"/>
<dbReference type="BRENDA" id="4.2.3.108">
    <property type="organism ID" value="10874"/>
</dbReference>
<dbReference type="UniPathway" id="UPA00213"/>
<dbReference type="GO" id="GO:0009507">
    <property type="term" value="C:chloroplast"/>
    <property type="evidence" value="ECO:0007669"/>
    <property type="project" value="UniProtKB-SubCell"/>
</dbReference>
<dbReference type="GO" id="GO:0034768">
    <property type="term" value="F:(E)-beta-ocimene synthase activity"/>
    <property type="evidence" value="ECO:0000314"/>
    <property type="project" value="UniProtKB"/>
</dbReference>
<dbReference type="GO" id="GO:0102313">
    <property type="term" value="F:1,8-cineole synthase activity"/>
    <property type="evidence" value="ECO:0000314"/>
    <property type="project" value="UniProtKB"/>
</dbReference>
<dbReference type="GO" id="GO:0000287">
    <property type="term" value="F:magnesium ion binding"/>
    <property type="evidence" value="ECO:0007669"/>
    <property type="project" value="InterPro"/>
</dbReference>
<dbReference type="GO" id="GO:0050551">
    <property type="term" value="F:myrcene synthase activity"/>
    <property type="evidence" value="ECO:0000314"/>
    <property type="project" value="UniProtKB"/>
</dbReference>
<dbReference type="GO" id="GO:0080015">
    <property type="term" value="F:sabinene synthase activity"/>
    <property type="evidence" value="ECO:0000314"/>
    <property type="project" value="UniProtKB"/>
</dbReference>
<dbReference type="GO" id="GO:0046248">
    <property type="term" value="P:alpha-pinene biosynthetic process"/>
    <property type="evidence" value="ECO:0000314"/>
    <property type="project" value="UniProtKB"/>
</dbReference>
<dbReference type="GO" id="GO:0007623">
    <property type="term" value="P:circadian rhythm"/>
    <property type="evidence" value="ECO:0000270"/>
    <property type="project" value="UniProtKB"/>
</dbReference>
<dbReference type="GO" id="GO:0016102">
    <property type="term" value="P:diterpenoid biosynthetic process"/>
    <property type="evidence" value="ECO:0007669"/>
    <property type="project" value="InterPro"/>
</dbReference>
<dbReference type="GO" id="GO:0010597">
    <property type="term" value="P:green leaf volatile biosynthetic process"/>
    <property type="evidence" value="ECO:0000314"/>
    <property type="project" value="UniProtKB"/>
</dbReference>
<dbReference type="GO" id="GO:0046250">
    <property type="term" value="P:limonene biosynthetic process"/>
    <property type="evidence" value="ECO:0000314"/>
    <property type="project" value="UniProtKB"/>
</dbReference>
<dbReference type="GO" id="GO:0043693">
    <property type="term" value="P:monoterpene biosynthetic process"/>
    <property type="evidence" value="ECO:0000314"/>
    <property type="project" value="UniProtKB"/>
</dbReference>
<dbReference type="CDD" id="cd00684">
    <property type="entry name" value="Terpene_cyclase_plant_C1"/>
    <property type="match status" value="1"/>
</dbReference>
<dbReference type="FunFam" id="1.10.600.10:FF:000007">
    <property type="entry name" value="Isoprene synthase, chloroplastic"/>
    <property type="match status" value="1"/>
</dbReference>
<dbReference type="FunFam" id="1.50.10.130:FF:000001">
    <property type="entry name" value="Isoprene synthase, chloroplastic"/>
    <property type="match status" value="1"/>
</dbReference>
<dbReference type="Gene3D" id="1.10.600.10">
    <property type="entry name" value="Farnesyl Diphosphate Synthase"/>
    <property type="match status" value="1"/>
</dbReference>
<dbReference type="Gene3D" id="1.50.10.130">
    <property type="entry name" value="Terpene synthase, N-terminal domain"/>
    <property type="match status" value="1"/>
</dbReference>
<dbReference type="InterPro" id="IPR008949">
    <property type="entry name" value="Isoprenoid_synthase_dom_sf"/>
</dbReference>
<dbReference type="InterPro" id="IPR034741">
    <property type="entry name" value="Terpene_cyclase-like_1_C"/>
</dbReference>
<dbReference type="InterPro" id="IPR044814">
    <property type="entry name" value="Terpene_cyclase_plant_C1"/>
</dbReference>
<dbReference type="InterPro" id="IPR001906">
    <property type="entry name" value="Terpene_synth_N"/>
</dbReference>
<dbReference type="InterPro" id="IPR036965">
    <property type="entry name" value="Terpene_synth_N_sf"/>
</dbReference>
<dbReference type="InterPro" id="IPR050148">
    <property type="entry name" value="Terpene_synthase-like"/>
</dbReference>
<dbReference type="InterPro" id="IPR005630">
    <property type="entry name" value="Terpene_synthase_metal-bd"/>
</dbReference>
<dbReference type="InterPro" id="IPR008930">
    <property type="entry name" value="Terpenoid_cyclase/PrenylTrfase"/>
</dbReference>
<dbReference type="PANTHER" id="PTHR31225">
    <property type="entry name" value="OS04G0344100 PROTEIN-RELATED"/>
    <property type="match status" value="1"/>
</dbReference>
<dbReference type="PANTHER" id="PTHR31225:SF9">
    <property type="entry name" value="TERPENE SYNTHASE 10"/>
    <property type="match status" value="1"/>
</dbReference>
<dbReference type="Pfam" id="PF01397">
    <property type="entry name" value="Terpene_synth"/>
    <property type="match status" value="1"/>
</dbReference>
<dbReference type="Pfam" id="PF03936">
    <property type="entry name" value="Terpene_synth_C"/>
    <property type="match status" value="1"/>
</dbReference>
<dbReference type="SFLD" id="SFLDS00005">
    <property type="entry name" value="Isoprenoid_Synthase_Type_I"/>
    <property type="match status" value="1"/>
</dbReference>
<dbReference type="SFLD" id="SFLDG01019">
    <property type="entry name" value="Terpene_Cyclase_Like_1_C_Termi"/>
    <property type="match status" value="1"/>
</dbReference>
<dbReference type="SUPFAM" id="SSF48239">
    <property type="entry name" value="Terpenoid cyclases/Protein prenyltransferases"/>
    <property type="match status" value="1"/>
</dbReference>
<dbReference type="SUPFAM" id="SSF48576">
    <property type="entry name" value="Terpenoid synthases"/>
    <property type="match status" value="1"/>
</dbReference>
<accession>A5Y5L5</accession>
<protein>
    <recommendedName>
        <fullName evidence="5">1,8-cineol synthase, chloroplastic</fullName>
        <ecNumber evidence="4">4.2.3.108</ecNumber>
    </recommendedName>
    <alternativeName>
        <fullName evidence="5">(E)-beta-ocimene synthase</fullName>
        <ecNumber evidence="4">4.2.3.106</ecNumber>
    </alternativeName>
    <alternativeName>
        <fullName evidence="5">Alpha-pinene synthase</fullName>
        <ecNumber evidence="4">4.2.3.-</ecNumber>
    </alternativeName>
    <alternativeName>
        <fullName evidence="5">Alpha-terpineol synthase</fullName>
        <ecNumber evidence="4">4.2.3.111</ecNumber>
    </alternativeName>
    <alternativeName>
        <fullName evidence="5">Beta-myrcene synthase</fullName>
        <ecNumber evidence="4">4.2.3.15</ecNumber>
    </alternativeName>
    <alternativeName>
        <fullName evidence="5">Limonene synthase</fullName>
        <ecNumber evidence="4">4.2.3.-</ecNumber>
    </alternativeName>
    <alternativeName>
        <fullName evidence="5">Sabinene synthase</fullName>
        <ecNumber evidence="4">4.2.3.-</ecNumber>
    </alternativeName>
</protein>
<reference key="1">
    <citation type="journal article" date="2007" name="Plant Mol. Biol.">
        <title>Regulation of simultaneous synthesis of floral scent terpenoids by the 1,8-cineole synthase of Nicotiana suaveolens.</title>
        <authorList>
            <person name="Roeder S."/>
            <person name="Hartmann A.-M."/>
            <person name="Effmert U."/>
            <person name="Piechulla B."/>
        </authorList>
    </citation>
    <scope>NUCLEOTIDE SEQUENCE [MRNA]</scope>
    <scope>FUNCTION</scope>
    <scope>CATALYTIC ACTIVITY</scope>
    <scope>PATHWAY</scope>
    <scope>TISSUE SPECIFICITY</scope>
    <scope>DEVELOPMENTAL STAGE</scope>
    <scope>INDUCTION</scope>
    <scope>BIOPHYSICOCHEMICAL PROPERTIES</scope>
    <scope>COFACTOR</scope>
    <source>
        <tissue>Flower</tissue>
    </source>
</reference>
<feature type="transit peptide" description="Chloroplast" evidence="3">
    <location>
        <begin position="1"/>
        <end position="51"/>
    </location>
</feature>
<feature type="chain" id="PRO_5002688202" description="1,8-cineol synthase, chloroplastic">
    <location>
        <begin position="52"/>
        <end position="610"/>
    </location>
</feature>
<feature type="short sequence motif" description="DDXXD motif" evidence="6">
    <location>
        <begin position="359"/>
        <end position="363"/>
    </location>
</feature>
<feature type="binding site" evidence="1">
    <location>
        <position position="322"/>
    </location>
    <ligand>
        <name>(2E)-geranyl diphosphate</name>
        <dbReference type="ChEBI" id="CHEBI:58057"/>
    </ligand>
</feature>
<feature type="binding site" evidence="1">
    <location>
        <position position="359"/>
    </location>
    <ligand>
        <name>(2E)-geranyl diphosphate</name>
        <dbReference type="ChEBI" id="CHEBI:58057"/>
    </ligand>
</feature>
<feature type="binding site" evidence="1">
    <location>
        <position position="359"/>
    </location>
    <ligand>
        <name>Mg(2+)</name>
        <dbReference type="ChEBI" id="CHEBI:18420"/>
        <label>1</label>
    </ligand>
</feature>
<feature type="binding site" evidence="1">
    <location>
        <position position="359"/>
    </location>
    <ligand>
        <name>Mg(2+)</name>
        <dbReference type="ChEBI" id="CHEBI:18420"/>
        <label>2</label>
    </ligand>
</feature>
<feature type="binding site" evidence="1">
    <location>
        <position position="363"/>
    </location>
    <ligand>
        <name>(2E)-geranyl diphosphate</name>
        <dbReference type="ChEBI" id="CHEBI:58057"/>
    </ligand>
</feature>
<feature type="binding site" evidence="1">
    <location>
        <position position="363"/>
    </location>
    <ligand>
        <name>Mg(2+)</name>
        <dbReference type="ChEBI" id="CHEBI:18420"/>
        <label>1</label>
    </ligand>
</feature>
<feature type="binding site" evidence="1">
    <location>
        <position position="363"/>
    </location>
    <ligand>
        <name>Mg(2+)</name>
        <dbReference type="ChEBI" id="CHEBI:18420"/>
        <label>2</label>
    </ligand>
</feature>
<feature type="binding site" evidence="1">
    <location>
        <position position="500"/>
    </location>
    <ligand>
        <name>(2E)-geranyl diphosphate</name>
        <dbReference type="ChEBI" id="CHEBI:58057"/>
    </ligand>
</feature>
<feature type="binding site" evidence="1">
    <location>
        <position position="503"/>
    </location>
    <ligand>
        <name>(2E)-geranyl diphosphate</name>
        <dbReference type="ChEBI" id="CHEBI:58057"/>
    </ligand>
</feature>
<feature type="binding site" evidence="1">
    <location>
        <position position="503"/>
    </location>
    <ligand>
        <name>Mg(2+)</name>
        <dbReference type="ChEBI" id="CHEBI:18420"/>
        <label>3</label>
    </ligand>
</feature>
<feature type="binding site" evidence="1">
    <location>
        <position position="507"/>
    </location>
    <ligand>
        <name>Mg(2+)</name>
        <dbReference type="ChEBI" id="CHEBI:18420"/>
        <label>3</label>
    </ligand>
</feature>
<feature type="binding site" evidence="1">
    <location>
        <position position="511"/>
    </location>
    <ligand>
        <name>Mg(2+)</name>
        <dbReference type="ChEBI" id="CHEBI:18420"/>
        <label>3</label>
    </ligand>
</feature>
<organism>
    <name type="scientific">Nicotiana suaveolens</name>
    <name type="common">Australian tobacco</name>
    <dbReference type="NCBI Taxonomy" id="200320"/>
    <lineage>
        <taxon>Eukaryota</taxon>
        <taxon>Viridiplantae</taxon>
        <taxon>Streptophyta</taxon>
        <taxon>Embryophyta</taxon>
        <taxon>Tracheophyta</taxon>
        <taxon>Spermatophyta</taxon>
        <taxon>Magnoliopsida</taxon>
        <taxon>eudicotyledons</taxon>
        <taxon>Gunneridae</taxon>
        <taxon>Pentapetalae</taxon>
        <taxon>asterids</taxon>
        <taxon>lamiids</taxon>
        <taxon>Solanales</taxon>
        <taxon>Solanaceae</taxon>
        <taxon>Nicotianoideae</taxon>
        <taxon>Nicotianeae</taxon>
        <taxon>Nicotiana</taxon>
    </lineage>
</organism>
<evidence type="ECO:0000250" key="1">
    <source>
        <dbReference type="UniProtKB" id="Q40577"/>
    </source>
</evidence>
<evidence type="ECO:0000250" key="2">
    <source>
        <dbReference type="UniProtKB" id="Q6JD73"/>
    </source>
</evidence>
<evidence type="ECO:0000255" key="3"/>
<evidence type="ECO:0000269" key="4">
    <source>
    </source>
</evidence>
<evidence type="ECO:0000303" key="5">
    <source>
    </source>
</evidence>
<evidence type="ECO:0000305" key="6"/>